<dbReference type="EMBL" id="AK007060">
    <property type="protein sequence ID" value="BAB24846.1"/>
    <property type="status" value="ALT_INIT"/>
    <property type="molecule type" value="mRNA"/>
</dbReference>
<dbReference type="EMBL" id="BC048560">
    <property type="protein sequence ID" value="AAH48560.1"/>
    <property type="status" value="ALT_INIT"/>
    <property type="molecule type" value="mRNA"/>
</dbReference>
<dbReference type="CCDS" id="CCDS50968.2"/>
<dbReference type="RefSeq" id="NP_082843.2">
    <property type="nucleotide sequence ID" value="NM_028567.2"/>
</dbReference>
<dbReference type="PDB" id="8I7R">
    <property type="method" value="EM"/>
    <property type="resolution" value="6.50 A"/>
    <property type="chains" value="a=1-101"/>
</dbReference>
<dbReference type="PDB" id="8IYJ">
    <property type="method" value="EM"/>
    <property type="resolution" value="3.50 A"/>
    <property type="chains" value="A/N1=1-101"/>
</dbReference>
<dbReference type="PDB" id="8TO0">
    <property type="method" value="EM"/>
    <property type="resolution" value="7.70 A"/>
    <property type="chains" value="AB=1-101"/>
</dbReference>
<dbReference type="PDBsum" id="8I7R"/>
<dbReference type="PDBsum" id="8IYJ"/>
<dbReference type="PDBsum" id="8TO0"/>
<dbReference type="EMDB" id="EMD-35230"/>
<dbReference type="EMDB" id="EMD-35823"/>
<dbReference type="EMDB" id="EMD-41431"/>
<dbReference type="SMR" id="Q9D9D9"/>
<dbReference type="STRING" id="10090.ENSMUSP00000029551"/>
<dbReference type="PhosphoSitePlus" id="Q9D9D9"/>
<dbReference type="Antibodypedia" id="62988">
    <property type="antibodies" value="60 antibodies from 9 providers"/>
</dbReference>
<dbReference type="DNASU" id="73545"/>
<dbReference type="Ensembl" id="ENSMUST00000238911.2">
    <property type="protein sequence ID" value="ENSMUSP00000158884.2"/>
    <property type="gene ID" value="ENSMUSG00000118506.3"/>
</dbReference>
<dbReference type="GeneID" id="73545"/>
<dbReference type="KEGG" id="mmu:73545"/>
<dbReference type="UCSC" id="uc008qbe.2">
    <property type="organism name" value="mouse"/>
</dbReference>
<dbReference type="AGR" id="MGI:1920795"/>
<dbReference type="CTD" id="388701"/>
<dbReference type="MGI" id="MGI:1920795">
    <property type="gene designation" value="Cfap141"/>
</dbReference>
<dbReference type="VEuPathDB" id="HostDB:ENSMUSG00000118506"/>
<dbReference type="GeneTree" id="ENSGT00510000048901"/>
<dbReference type="InParanoid" id="Q9D9D9"/>
<dbReference type="PhylomeDB" id="Q9D9D9"/>
<dbReference type="TreeFam" id="TF341125"/>
<dbReference type="BioGRID-ORCS" id="73545">
    <property type="hits" value="2 hits in 28 CRISPR screens"/>
</dbReference>
<dbReference type="PRO" id="PR:Q9D9D9"/>
<dbReference type="Proteomes" id="UP000000589">
    <property type="component" value="Chromosome 3"/>
</dbReference>
<dbReference type="RNAct" id="Q9D9D9">
    <property type="molecule type" value="protein"/>
</dbReference>
<dbReference type="Bgee" id="ENSMUSG00000118506">
    <property type="expression patterns" value="Expressed in spermatid and 61 other cell types or tissues"/>
</dbReference>
<dbReference type="ExpressionAtlas" id="Q9D9D9">
    <property type="expression patterns" value="baseline"/>
</dbReference>
<dbReference type="GO" id="GO:0160111">
    <property type="term" value="C:axonemal A tubule inner sheath"/>
    <property type="evidence" value="ECO:0000314"/>
    <property type="project" value="UniProtKB"/>
</dbReference>
<dbReference type="GO" id="GO:0005879">
    <property type="term" value="C:axonemal microtubule"/>
    <property type="evidence" value="ECO:0000250"/>
    <property type="project" value="UniProtKB"/>
</dbReference>
<dbReference type="GO" id="GO:0036126">
    <property type="term" value="C:sperm flagellum"/>
    <property type="evidence" value="ECO:0000314"/>
    <property type="project" value="UniProtKB"/>
</dbReference>
<dbReference type="GO" id="GO:0030317">
    <property type="term" value="P:flagellated sperm motility"/>
    <property type="evidence" value="ECO:0000314"/>
    <property type="project" value="UniProtKB"/>
</dbReference>
<dbReference type="InterPro" id="IPR029375">
    <property type="entry name" value="CFAP141"/>
</dbReference>
<dbReference type="PANTHER" id="PTHR35818">
    <property type="entry name" value="C1ORF189"/>
    <property type="match status" value="1"/>
</dbReference>
<dbReference type="PANTHER" id="PTHR35818:SF1">
    <property type="entry name" value="CILIA- AND FLAGELLA-ASSOCIATED PROTEIN 141"/>
    <property type="match status" value="1"/>
</dbReference>
<dbReference type="Pfam" id="PF15104">
    <property type="entry name" value="CFAP141"/>
    <property type="match status" value="1"/>
</dbReference>
<name>CP141_MOUSE</name>
<protein>
    <recommendedName>
        <fullName evidence="6">Cilia- and flagella-associated protein 141</fullName>
    </recommendedName>
</protein>
<reference key="1">
    <citation type="journal article" date="2005" name="Science">
        <title>The transcriptional landscape of the mammalian genome.</title>
        <authorList>
            <person name="Carninci P."/>
            <person name="Kasukawa T."/>
            <person name="Katayama S."/>
            <person name="Gough J."/>
            <person name="Frith M.C."/>
            <person name="Maeda N."/>
            <person name="Oyama R."/>
            <person name="Ravasi T."/>
            <person name="Lenhard B."/>
            <person name="Wells C."/>
            <person name="Kodzius R."/>
            <person name="Shimokawa K."/>
            <person name="Bajic V.B."/>
            <person name="Brenner S.E."/>
            <person name="Batalov S."/>
            <person name="Forrest A.R."/>
            <person name="Zavolan M."/>
            <person name="Davis M.J."/>
            <person name="Wilming L.G."/>
            <person name="Aidinis V."/>
            <person name="Allen J.E."/>
            <person name="Ambesi-Impiombato A."/>
            <person name="Apweiler R."/>
            <person name="Aturaliya R.N."/>
            <person name="Bailey T.L."/>
            <person name="Bansal M."/>
            <person name="Baxter L."/>
            <person name="Beisel K.W."/>
            <person name="Bersano T."/>
            <person name="Bono H."/>
            <person name="Chalk A.M."/>
            <person name="Chiu K.P."/>
            <person name="Choudhary V."/>
            <person name="Christoffels A."/>
            <person name="Clutterbuck D.R."/>
            <person name="Crowe M.L."/>
            <person name="Dalla E."/>
            <person name="Dalrymple B.P."/>
            <person name="de Bono B."/>
            <person name="Della Gatta G."/>
            <person name="di Bernardo D."/>
            <person name="Down T."/>
            <person name="Engstrom P."/>
            <person name="Fagiolini M."/>
            <person name="Faulkner G."/>
            <person name="Fletcher C.F."/>
            <person name="Fukushima T."/>
            <person name="Furuno M."/>
            <person name="Futaki S."/>
            <person name="Gariboldi M."/>
            <person name="Georgii-Hemming P."/>
            <person name="Gingeras T.R."/>
            <person name="Gojobori T."/>
            <person name="Green R.E."/>
            <person name="Gustincich S."/>
            <person name="Harbers M."/>
            <person name="Hayashi Y."/>
            <person name="Hensch T.K."/>
            <person name="Hirokawa N."/>
            <person name="Hill D."/>
            <person name="Huminiecki L."/>
            <person name="Iacono M."/>
            <person name="Ikeo K."/>
            <person name="Iwama A."/>
            <person name="Ishikawa T."/>
            <person name="Jakt M."/>
            <person name="Kanapin A."/>
            <person name="Katoh M."/>
            <person name="Kawasawa Y."/>
            <person name="Kelso J."/>
            <person name="Kitamura H."/>
            <person name="Kitano H."/>
            <person name="Kollias G."/>
            <person name="Krishnan S.P."/>
            <person name="Kruger A."/>
            <person name="Kummerfeld S.K."/>
            <person name="Kurochkin I.V."/>
            <person name="Lareau L.F."/>
            <person name="Lazarevic D."/>
            <person name="Lipovich L."/>
            <person name="Liu J."/>
            <person name="Liuni S."/>
            <person name="McWilliam S."/>
            <person name="Madan Babu M."/>
            <person name="Madera M."/>
            <person name="Marchionni L."/>
            <person name="Matsuda H."/>
            <person name="Matsuzawa S."/>
            <person name="Miki H."/>
            <person name="Mignone F."/>
            <person name="Miyake S."/>
            <person name="Morris K."/>
            <person name="Mottagui-Tabar S."/>
            <person name="Mulder N."/>
            <person name="Nakano N."/>
            <person name="Nakauchi H."/>
            <person name="Ng P."/>
            <person name="Nilsson R."/>
            <person name="Nishiguchi S."/>
            <person name="Nishikawa S."/>
            <person name="Nori F."/>
            <person name="Ohara O."/>
            <person name="Okazaki Y."/>
            <person name="Orlando V."/>
            <person name="Pang K.C."/>
            <person name="Pavan W.J."/>
            <person name="Pavesi G."/>
            <person name="Pesole G."/>
            <person name="Petrovsky N."/>
            <person name="Piazza S."/>
            <person name="Reed J."/>
            <person name="Reid J.F."/>
            <person name="Ring B.Z."/>
            <person name="Ringwald M."/>
            <person name="Rost B."/>
            <person name="Ruan Y."/>
            <person name="Salzberg S.L."/>
            <person name="Sandelin A."/>
            <person name="Schneider C."/>
            <person name="Schoenbach C."/>
            <person name="Sekiguchi K."/>
            <person name="Semple C.A."/>
            <person name="Seno S."/>
            <person name="Sessa L."/>
            <person name="Sheng Y."/>
            <person name="Shibata Y."/>
            <person name="Shimada H."/>
            <person name="Shimada K."/>
            <person name="Silva D."/>
            <person name="Sinclair B."/>
            <person name="Sperling S."/>
            <person name="Stupka E."/>
            <person name="Sugiura K."/>
            <person name="Sultana R."/>
            <person name="Takenaka Y."/>
            <person name="Taki K."/>
            <person name="Tammoja K."/>
            <person name="Tan S.L."/>
            <person name="Tang S."/>
            <person name="Taylor M.S."/>
            <person name="Tegner J."/>
            <person name="Teichmann S.A."/>
            <person name="Ueda H.R."/>
            <person name="van Nimwegen E."/>
            <person name="Verardo R."/>
            <person name="Wei C.L."/>
            <person name="Yagi K."/>
            <person name="Yamanishi H."/>
            <person name="Zabarovsky E."/>
            <person name="Zhu S."/>
            <person name="Zimmer A."/>
            <person name="Hide W."/>
            <person name="Bult C."/>
            <person name="Grimmond S.M."/>
            <person name="Teasdale R.D."/>
            <person name="Liu E.T."/>
            <person name="Brusic V."/>
            <person name="Quackenbush J."/>
            <person name="Wahlestedt C."/>
            <person name="Mattick J.S."/>
            <person name="Hume D.A."/>
            <person name="Kai C."/>
            <person name="Sasaki D."/>
            <person name="Tomaru Y."/>
            <person name="Fukuda S."/>
            <person name="Kanamori-Katayama M."/>
            <person name="Suzuki M."/>
            <person name="Aoki J."/>
            <person name="Arakawa T."/>
            <person name="Iida J."/>
            <person name="Imamura K."/>
            <person name="Itoh M."/>
            <person name="Kato T."/>
            <person name="Kawaji H."/>
            <person name="Kawagashira N."/>
            <person name="Kawashima T."/>
            <person name="Kojima M."/>
            <person name="Kondo S."/>
            <person name="Konno H."/>
            <person name="Nakano K."/>
            <person name="Ninomiya N."/>
            <person name="Nishio T."/>
            <person name="Okada M."/>
            <person name="Plessy C."/>
            <person name="Shibata K."/>
            <person name="Shiraki T."/>
            <person name="Suzuki S."/>
            <person name="Tagami M."/>
            <person name="Waki K."/>
            <person name="Watahiki A."/>
            <person name="Okamura-Oho Y."/>
            <person name="Suzuki H."/>
            <person name="Kawai J."/>
            <person name="Hayashizaki Y."/>
        </authorList>
    </citation>
    <scope>NUCLEOTIDE SEQUENCE [LARGE SCALE MRNA]</scope>
    <source>
        <strain>C57BL/6J</strain>
        <tissue>Testis</tissue>
    </source>
</reference>
<reference key="2">
    <citation type="journal article" date="2004" name="Genome Res.">
        <title>The status, quality, and expansion of the NIH full-length cDNA project: the Mammalian Gene Collection (MGC).</title>
        <authorList>
            <consortium name="The MGC Project Team"/>
        </authorList>
    </citation>
    <scope>NUCLEOTIDE SEQUENCE [LARGE SCALE MRNA]</scope>
    <source>
        <tissue>Testis</tissue>
    </source>
</reference>
<reference evidence="8" key="3">
    <citation type="journal article" date="2023" name="Cell">
        <title>Structures of sperm flagellar doublet microtubules expand the genetic spectrum of male infertility.</title>
        <authorList>
            <person name="Zhou L."/>
            <person name="Liu H."/>
            <person name="Liu S."/>
            <person name="Yang X."/>
            <person name="Dong Y."/>
            <person name="Pan Y."/>
            <person name="Xiao Z."/>
            <person name="Zheng B."/>
            <person name="Sun Y."/>
            <person name="Huang P."/>
            <person name="Zhang X."/>
            <person name="Hu J."/>
            <person name="Sun R."/>
            <person name="Feng S."/>
            <person name="Zhu Y."/>
            <person name="Liu M."/>
            <person name="Gui M."/>
            <person name="Wu J."/>
        </authorList>
    </citation>
    <scope>STRUCTURE BY ELECTRON MICROSCOPY (3.50 ANGSTROMS) OF SPERM FLAGELLAR DOUBLET MICROTUBULES</scope>
    <scope>FUNCTION</scope>
    <scope>SUBCELLULAR LOCATION</scope>
    <scope>SUBUNIT</scope>
</reference>
<reference evidence="9" key="4">
    <citation type="journal article" date="2023" name="Cell">
        <title>De novo protein identification in mammalian sperm using in situ cryoelectron tomography and AlphaFold2 docking.</title>
        <authorList>
            <person name="Chen Z."/>
            <person name="Shiozaki M."/>
            <person name="Haas K.M."/>
            <person name="Skinner W.M."/>
            <person name="Zhao S."/>
            <person name="Guo C."/>
            <person name="Polacco B.J."/>
            <person name="Yu Z."/>
            <person name="Krogan N.J."/>
            <person name="Lishko P.V."/>
            <person name="Kaake R.M."/>
            <person name="Vale R.D."/>
            <person name="Agard D.A."/>
        </authorList>
    </citation>
    <scope>STRUCTURE BY ELECTRON MICROSCOPY (7.70 ANGSTROMS) OF SPERM FLAGELLAR DOUBLET MICROTUBULES</scope>
    <scope>FUNCTION</scope>
    <scope>SUBCELLULAR LOCATION</scope>
    <scope>SUBUNIT</scope>
</reference>
<reference evidence="7" key="5">
    <citation type="journal article" date="2023" name="Cell Discov.">
        <title>In-cell structural insight into the stability of sperm microtubule doublet.</title>
        <authorList>
            <person name="Tai L."/>
            <person name="Yin G."/>
            <person name="Huang X."/>
            <person name="Sun F."/>
            <person name="Zhu Y."/>
        </authorList>
    </citation>
    <scope>STRUCTURE BY ELECTRON MICROSCOPY (4.50 ANGSTROMS)</scope>
    <scope>FUNCTION</scope>
    <scope>SUBUNIT</scope>
    <scope>SUBCELLULAR LOCATION</scope>
</reference>
<comment type="function">
    <text evidence="2 3 4">Microtubule inner protein (MIP) part of the dynein-decorated doublet microtubules (DMTs) in cilia axoneme, which is required for motile cilia beating.</text>
</comment>
<comment type="subunit">
    <text evidence="2 3 4">Microtubule inner protein component of sperm flagellar doublet microtubules.</text>
</comment>
<comment type="subcellular location">
    <subcellularLocation>
        <location evidence="1">Cytoplasm</location>
        <location evidence="1">Cytoskeleton</location>
        <location evidence="1">Cilium axoneme</location>
    </subcellularLocation>
    <subcellularLocation>
        <location evidence="2 3 4">Cytoplasm</location>
        <location evidence="2 3 4">Cytoskeleton</location>
        <location evidence="2 3 4">Flagellum axoneme</location>
    </subcellularLocation>
</comment>
<comment type="sequence caution" evidence="5">
    <conflict type="erroneous initiation">
        <sequence resource="EMBL-CDS" id="AAH48560"/>
    </conflict>
    <text>Extended N-terminus.</text>
</comment>
<comment type="sequence caution" evidence="5">
    <conflict type="erroneous initiation">
        <sequence resource="EMBL-CDS" id="BAB24846"/>
    </conflict>
    <text>Extended N-terminus.</text>
</comment>
<feature type="chain" id="PRO_0000270967" description="Cilia- and flagella-associated protein 141">
    <location>
        <begin position="1"/>
        <end position="101"/>
    </location>
</feature>
<gene>
    <name evidence="6" type="primary">Cfap141</name>
</gene>
<organism>
    <name type="scientific">Mus musculus</name>
    <name type="common">Mouse</name>
    <dbReference type="NCBI Taxonomy" id="10090"/>
    <lineage>
        <taxon>Eukaryota</taxon>
        <taxon>Metazoa</taxon>
        <taxon>Chordata</taxon>
        <taxon>Craniata</taxon>
        <taxon>Vertebrata</taxon>
        <taxon>Euteleostomi</taxon>
        <taxon>Mammalia</taxon>
        <taxon>Eutheria</taxon>
        <taxon>Euarchontoglires</taxon>
        <taxon>Glires</taxon>
        <taxon>Rodentia</taxon>
        <taxon>Myomorpha</taxon>
        <taxon>Muroidea</taxon>
        <taxon>Muridae</taxon>
        <taxon>Murinae</taxon>
        <taxon>Mus</taxon>
        <taxon>Mus</taxon>
    </lineage>
</organism>
<accession>Q9D9D9</accession>
<proteinExistence type="evidence at protein level"/>
<evidence type="ECO:0000250" key="1">
    <source>
        <dbReference type="UniProtKB" id="Q32L75"/>
    </source>
</evidence>
<evidence type="ECO:0000269" key="2">
    <source>
    </source>
</evidence>
<evidence type="ECO:0000269" key="3">
    <source>
    </source>
</evidence>
<evidence type="ECO:0000269" key="4">
    <source>
    </source>
</evidence>
<evidence type="ECO:0000305" key="5"/>
<evidence type="ECO:0000312" key="6">
    <source>
        <dbReference type="MGI" id="MGI:1920795"/>
    </source>
</evidence>
<evidence type="ECO:0007744" key="7">
    <source>
        <dbReference type="PDB" id="8I7R"/>
    </source>
</evidence>
<evidence type="ECO:0007744" key="8">
    <source>
        <dbReference type="PDB" id="8IYJ"/>
    </source>
</evidence>
<evidence type="ECO:0007744" key="9">
    <source>
        <dbReference type="PDB" id="8TO0"/>
    </source>
</evidence>
<keyword id="KW-0002">3D-structure</keyword>
<keyword id="KW-0966">Cell projection</keyword>
<keyword id="KW-0969">Cilium</keyword>
<keyword id="KW-0963">Cytoplasm</keyword>
<keyword id="KW-0206">Cytoskeleton</keyword>
<keyword id="KW-0282">Flagellum</keyword>
<keyword id="KW-1185">Reference proteome</keyword>
<sequence length="101" mass="12258">MSAEKMTKLEENLQRAVALKKTVDRWRNFHIHCMWQTTLDQRRNLFAALRMKDTKEQELALSNKQLLVVRQAALHELFEKEYQQYQQELNQMGKAFYEERL</sequence>